<keyword id="KW-0004">4Fe-4S</keyword>
<keyword id="KW-0963">Cytoplasm</keyword>
<keyword id="KW-0408">Iron</keyword>
<keyword id="KW-0411">Iron-sulfur</keyword>
<keyword id="KW-0479">Metal-binding</keyword>
<keyword id="KW-0949">S-adenosyl-L-methionine</keyword>
<keyword id="KW-0808">Transferase</keyword>
<evidence type="ECO:0000255" key="1">
    <source>
        <dbReference type="HAMAP-Rule" id="MF_01865"/>
    </source>
</evidence>
<evidence type="ECO:0000255" key="2">
    <source>
        <dbReference type="PROSITE-ProRule" id="PRU01266"/>
    </source>
</evidence>
<proteinExistence type="inferred from homology"/>
<feature type="chain" id="PRO_0000374761" description="Ribosomal protein uS12 methylthiotransferase RimO">
    <location>
        <begin position="1"/>
        <end position="460"/>
    </location>
</feature>
<feature type="domain" description="MTTase N-terminal" evidence="1">
    <location>
        <begin position="16"/>
        <end position="130"/>
    </location>
</feature>
<feature type="domain" description="Radical SAM core" evidence="2">
    <location>
        <begin position="150"/>
        <end position="382"/>
    </location>
</feature>
<feature type="domain" description="TRAM" evidence="1">
    <location>
        <begin position="385"/>
        <end position="455"/>
    </location>
</feature>
<feature type="binding site" evidence="1">
    <location>
        <position position="25"/>
    </location>
    <ligand>
        <name>[4Fe-4S] cluster</name>
        <dbReference type="ChEBI" id="CHEBI:49883"/>
        <label>1</label>
    </ligand>
</feature>
<feature type="binding site" evidence="1">
    <location>
        <position position="61"/>
    </location>
    <ligand>
        <name>[4Fe-4S] cluster</name>
        <dbReference type="ChEBI" id="CHEBI:49883"/>
        <label>1</label>
    </ligand>
</feature>
<feature type="binding site" evidence="1">
    <location>
        <position position="93"/>
    </location>
    <ligand>
        <name>[4Fe-4S] cluster</name>
        <dbReference type="ChEBI" id="CHEBI:49883"/>
        <label>1</label>
    </ligand>
</feature>
<feature type="binding site" evidence="1">
    <location>
        <position position="164"/>
    </location>
    <ligand>
        <name>[4Fe-4S] cluster</name>
        <dbReference type="ChEBI" id="CHEBI:49883"/>
        <label>2</label>
        <note>4Fe-4S-S-AdoMet</note>
    </ligand>
</feature>
<feature type="binding site" evidence="1">
    <location>
        <position position="168"/>
    </location>
    <ligand>
        <name>[4Fe-4S] cluster</name>
        <dbReference type="ChEBI" id="CHEBI:49883"/>
        <label>2</label>
        <note>4Fe-4S-S-AdoMet</note>
    </ligand>
</feature>
<feature type="binding site" evidence="1">
    <location>
        <position position="171"/>
    </location>
    <ligand>
        <name>[4Fe-4S] cluster</name>
        <dbReference type="ChEBI" id="CHEBI:49883"/>
        <label>2</label>
        <note>4Fe-4S-S-AdoMet</note>
    </ligand>
</feature>
<accession>Q5L5W7</accession>
<name>RIMO_CHLAB</name>
<gene>
    <name evidence="1" type="primary">rimO</name>
    <name type="ordered locus">CAB512</name>
</gene>
<organism>
    <name type="scientific">Chlamydia abortus (strain DSM 27085 / S26/3)</name>
    <name type="common">Chlamydophila abortus</name>
    <dbReference type="NCBI Taxonomy" id="218497"/>
    <lineage>
        <taxon>Bacteria</taxon>
        <taxon>Pseudomonadati</taxon>
        <taxon>Chlamydiota</taxon>
        <taxon>Chlamydiia</taxon>
        <taxon>Chlamydiales</taxon>
        <taxon>Chlamydiaceae</taxon>
        <taxon>Chlamydia/Chlamydophila group</taxon>
        <taxon>Chlamydia</taxon>
    </lineage>
</organism>
<comment type="function">
    <text evidence="1">Catalyzes the methylthiolation of an aspartic acid residue of ribosomal protein uS12.</text>
</comment>
<comment type="catalytic activity">
    <reaction evidence="1">
        <text>L-aspartate(89)-[ribosomal protein uS12]-hydrogen + (sulfur carrier)-SH + AH2 + 2 S-adenosyl-L-methionine = 3-methylsulfanyl-L-aspartate(89)-[ribosomal protein uS12]-hydrogen + (sulfur carrier)-H + 5'-deoxyadenosine + L-methionine + A + S-adenosyl-L-homocysteine + 2 H(+)</text>
        <dbReference type="Rhea" id="RHEA:37087"/>
        <dbReference type="Rhea" id="RHEA-COMP:10460"/>
        <dbReference type="Rhea" id="RHEA-COMP:10461"/>
        <dbReference type="Rhea" id="RHEA-COMP:14737"/>
        <dbReference type="Rhea" id="RHEA-COMP:14739"/>
        <dbReference type="ChEBI" id="CHEBI:13193"/>
        <dbReference type="ChEBI" id="CHEBI:15378"/>
        <dbReference type="ChEBI" id="CHEBI:17319"/>
        <dbReference type="ChEBI" id="CHEBI:17499"/>
        <dbReference type="ChEBI" id="CHEBI:29917"/>
        <dbReference type="ChEBI" id="CHEBI:29961"/>
        <dbReference type="ChEBI" id="CHEBI:57844"/>
        <dbReference type="ChEBI" id="CHEBI:57856"/>
        <dbReference type="ChEBI" id="CHEBI:59789"/>
        <dbReference type="ChEBI" id="CHEBI:64428"/>
        <dbReference type="ChEBI" id="CHEBI:73599"/>
        <dbReference type="EC" id="2.8.4.4"/>
    </reaction>
</comment>
<comment type="cofactor">
    <cofactor evidence="1">
        <name>[4Fe-4S] cluster</name>
        <dbReference type="ChEBI" id="CHEBI:49883"/>
    </cofactor>
    <text evidence="1">Binds 2 [4Fe-4S] clusters. One cluster is coordinated with 3 cysteines and an exchangeable S-adenosyl-L-methionine.</text>
</comment>
<comment type="subcellular location">
    <subcellularLocation>
        <location evidence="1">Cytoplasm</location>
    </subcellularLocation>
</comment>
<comment type="similarity">
    <text evidence="1">Belongs to the methylthiotransferase family. RimO subfamily.</text>
</comment>
<reference key="1">
    <citation type="journal article" date="2005" name="Genome Res.">
        <title>The Chlamydophila abortus genome sequence reveals an array of variable proteins that contribute to interspecies variation.</title>
        <authorList>
            <person name="Thomson N.R."/>
            <person name="Yeats C."/>
            <person name="Bell K."/>
            <person name="Holden M.T.G."/>
            <person name="Bentley S.D."/>
            <person name="Livingstone M."/>
            <person name="Cerdeno-Tarraga A.-M."/>
            <person name="Harris B."/>
            <person name="Doggett J."/>
            <person name="Ormond D."/>
            <person name="Mungall K."/>
            <person name="Clarke K."/>
            <person name="Feltwell T."/>
            <person name="Hance Z."/>
            <person name="Sanders M."/>
            <person name="Quail M.A."/>
            <person name="Price C."/>
            <person name="Barrell B.G."/>
            <person name="Parkhill J."/>
            <person name="Longbottom D."/>
        </authorList>
    </citation>
    <scope>NUCLEOTIDE SEQUENCE [LARGE SCALE GENOMIC DNA]</scope>
    <source>
        <strain>DSM 27085 / S26/3</strain>
    </source>
</reference>
<dbReference type="EC" id="2.8.4.4" evidence="1"/>
<dbReference type="EMBL" id="CR848038">
    <property type="protein sequence ID" value="CAH63964.1"/>
    <property type="molecule type" value="Genomic_DNA"/>
</dbReference>
<dbReference type="RefSeq" id="WP_011097131.1">
    <property type="nucleotide sequence ID" value="NC_004552.2"/>
</dbReference>
<dbReference type="SMR" id="Q5L5W7"/>
<dbReference type="KEGG" id="cab:CAB512"/>
<dbReference type="eggNOG" id="COG0621">
    <property type="taxonomic scope" value="Bacteria"/>
</dbReference>
<dbReference type="HOGENOM" id="CLU_018697_0_1_0"/>
<dbReference type="OrthoDB" id="9805215at2"/>
<dbReference type="Proteomes" id="UP000001012">
    <property type="component" value="Chromosome"/>
</dbReference>
<dbReference type="GO" id="GO:0005829">
    <property type="term" value="C:cytosol"/>
    <property type="evidence" value="ECO:0007669"/>
    <property type="project" value="TreeGrafter"/>
</dbReference>
<dbReference type="GO" id="GO:0051539">
    <property type="term" value="F:4 iron, 4 sulfur cluster binding"/>
    <property type="evidence" value="ECO:0007669"/>
    <property type="project" value="UniProtKB-UniRule"/>
</dbReference>
<dbReference type="GO" id="GO:0035599">
    <property type="term" value="F:aspartic acid methylthiotransferase activity"/>
    <property type="evidence" value="ECO:0007669"/>
    <property type="project" value="TreeGrafter"/>
</dbReference>
<dbReference type="GO" id="GO:0046872">
    <property type="term" value="F:metal ion binding"/>
    <property type="evidence" value="ECO:0007669"/>
    <property type="project" value="UniProtKB-KW"/>
</dbReference>
<dbReference type="GO" id="GO:0103039">
    <property type="term" value="F:protein methylthiotransferase activity"/>
    <property type="evidence" value="ECO:0007669"/>
    <property type="project" value="UniProtKB-EC"/>
</dbReference>
<dbReference type="GO" id="GO:0006400">
    <property type="term" value="P:tRNA modification"/>
    <property type="evidence" value="ECO:0007669"/>
    <property type="project" value="InterPro"/>
</dbReference>
<dbReference type="CDD" id="cd01335">
    <property type="entry name" value="Radical_SAM"/>
    <property type="match status" value="1"/>
</dbReference>
<dbReference type="FunFam" id="3.80.30.20:FF:000001">
    <property type="entry name" value="tRNA-2-methylthio-N(6)-dimethylallyladenosine synthase 2"/>
    <property type="match status" value="1"/>
</dbReference>
<dbReference type="Gene3D" id="3.40.50.12160">
    <property type="entry name" value="Methylthiotransferase, N-terminal domain"/>
    <property type="match status" value="1"/>
</dbReference>
<dbReference type="Gene3D" id="2.40.50.140">
    <property type="entry name" value="Nucleic acid-binding proteins"/>
    <property type="match status" value="1"/>
</dbReference>
<dbReference type="Gene3D" id="3.80.30.20">
    <property type="entry name" value="tm_1862 like domain"/>
    <property type="match status" value="1"/>
</dbReference>
<dbReference type="HAMAP" id="MF_01865">
    <property type="entry name" value="MTTase_RimO"/>
    <property type="match status" value="1"/>
</dbReference>
<dbReference type="InterPro" id="IPR006638">
    <property type="entry name" value="Elp3/MiaA/NifB-like_rSAM"/>
</dbReference>
<dbReference type="InterPro" id="IPR005839">
    <property type="entry name" value="Methylthiotransferase"/>
</dbReference>
<dbReference type="InterPro" id="IPR020612">
    <property type="entry name" value="Methylthiotransferase_CS"/>
</dbReference>
<dbReference type="InterPro" id="IPR013848">
    <property type="entry name" value="Methylthiotransferase_N"/>
</dbReference>
<dbReference type="InterPro" id="IPR038135">
    <property type="entry name" value="Methylthiotransferase_N_sf"/>
</dbReference>
<dbReference type="InterPro" id="IPR012340">
    <property type="entry name" value="NA-bd_OB-fold"/>
</dbReference>
<dbReference type="InterPro" id="IPR005840">
    <property type="entry name" value="Ribosomal_uS12_MeSTrfase_RimO"/>
</dbReference>
<dbReference type="InterPro" id="IPR007197">
    <property type="entry name" value="rSAM"/>
</dbReference>
<dbReference type="InterPro" id="IPR023404">
    <property type="entry name" value="rSAM_horseshoe"/>
</dbReference>
<dbReference type="InterPro" id="IPR002792">
    <property type="entry name" value="TRAM_dom"/>
</dbReference>
<dbReference type="NCBIfam" id="TIGR01125">
    <property type="entry name" value="30S ribosomal protein S12 methylthiotransferase RimO"/>
    <property type="match status" value="1"/>
</dbReference>
<dbReference type="NCBIfam" id="TIGR00089">
    <property type="entry name" value="MiaB/RimO family radical SAM methylthiotransferase"/>
    <property type="match status" value="1"/>
</dbReference>
<dbReference type="PANTHER" id="PTHR43837">
    <property type="entry name" value="RIBOSOMAL PROTEIN S12 METHYLTHIOTRANSFERASE RIMO"/>
    <property type="match status" value="1"/>
</dbReference>
<dbReference type="PANTHER" id="PTHR43837:SF1">
    <property type="entry name" value="RIBOSOMAL PROTEIN US12 METHYLTHIOTRANSFERASE RIMO"/>
    <property type="match status" value="1"/>
</dbReference>
<dbReference type="Pfam" id="PF04055">
    <property type="entry name" value="Radical_SAM"/>
    <property type="match status" value="1"/>
</dbReference>
<dbReference type="Pfam" id="PF18693">
    <property type="entry name" value="TRAM_2"/>
    <property type="match status" value="1"/>
</dbReference>
<dbReference type="Pfam" id="PF00919">
    <property type="entry name" value="UPF0004"/>
    <property type="match status" value="1"/>
</dbReference>
<dbReference type="SFLD" id="SFLDG01082">
    <property type="entry name" value="B12-binding_domain_containing"/>
    <property type="match status" value="1"/>
</dbReference>
<dbReference type="SFLD" id="SFLDS00029">
    <property type="entry name" value="Radical_SAM"/>
    <property type="match status" value="1"/>
</dbReference>
<dbReference type="SFLD" id="SFLDF00274">
    <property type="entry name" value="ribosomal_protein_S12_methylth"/>
    <property type="match status" value="1"/>
</dbReference>
<dbReference type="SMART" id="SM00729">
    <property type="entry name" value="Elp3"/>
    <property type="match status" value="1"/>
</dbReference>
<dbReference type="SUPFAM" id="SSF102114">
    <property type="entry name" value="Radical SAM enzymes"/>
    <property type="match status" value="1"/>
</dbReference>
<dbReference type="PROSITE" id="PS51449">
    <property type="entry name" value="MTTASE_N"/>
    <property type="match status" value="1"/>
</dbReference>
<dbReference type="PROSITE" id="PS01278">
    <property type="entry name" value="MTTASE_RADICAL"/>
    <property type="match status" value="1"/>
</dbReference>
<dbReference type="PROSITE" id="PS51918">
    <property type="entry name" value="RADICAL_SAM"/>
    <property type="match status" value="1"/>
</dbReference>
<sequence length="460" mass="52548">MTTKEQFFFKGATSKNKIHFISLGCSRNLVDSEVMLGILLKAGYEATELLREADYLILNTCGFLKAARDESTDYLQRIINEKKETAKIILTGCMVSKHKEELKPWLPYVHYVLGSGDVEHILSAIESKESGEKLSSKSYLEMGEVPRKLSTPKHYAYLKIAEGCRKRCAFCIIPTIKGGLRSKPLEQVMKEFRLLLKMGVKEIILIAQDLGDYGKDLSKDRKSCLYSVLREMLKEPGNYWIRMLYLYPDEVDDTLIDLMEKDQRLLPYVDIPLQHINNRVLKKMLRTTSREQILDLLTKLRTRIPHIYIRSSLIVGFPGETEEEFQELVNFVGEGWIDNLGIFSYSQEKGSLAAEMPDQIPQSVKSKRLKILSQTQKKNVEKHNKQFVGKIVEAVIDGYHPDSEFLLTARFYGQAPEVDPCIIVNEARLVSGFGERYLIEITGYVGYDLVGRVVNKVPGE</sequence>
<protein>
    <recommendedName>
        <fullName evidence="1">Ribosomal protein uS12 methylthiotransferase RimO</fullName>
        <shortName evidence="1">uS12 MTTase</shortName>
        <shortName evidence="1">uS12 methylthiotransferase</shortName>
        <ecNumber evidence="1">2.8.4.4</ecNumber>
    </recommendedName>
    <alternativeName>
        <fullName evidence="1">Ribosomal protein uS12 (aspartate-C(3))-methylthiotransferase</fullName>
    </alternativeName>
    <alternativeName>
        <fullName evidence="1">Ribosome maturation factor RimO</fullName>
    </alternativeName>
</protein>